<keyword id="KW-0150">Chloroplast</keyword>
<keyword id="KW-0472">Membrane</keyword>
<keyword id="KW-0602">Photosynthesis</keyword>
<keyword id="KW-0604">Photosystem II</keyword>
<keyword id="KW-0934">Plastid</keyword>
<keyword id="KW-0793">Thylakoid</keyword>
<keyword id="KW-0812">Transmembrane</keyword>
<keyword id="KW-1133">Transmembrane helix</keyword>
<protein>
    <recommendedName>
        <fullName evidence="1">Photosystem II reaction center protein T</fullName>
        <shortName evidence="1">PSII-T</shortName>
    </recommendedName>
</protein>
<dbReference type="EMBL" id="AF469707">
    <property type="protein sequence ID" value="AAQ18532.1"/>
    <property type="molecule type" value="Genomic_DNA"/>
</dbReference>
<dbReference type="RefSeq" id="YP_007474627.1">
    <property type="nucleotide sequence ID" value="NC_020319.1"/>
</dbReference>
<dbReference type="SMR" id="Q71LA7"/>
<dbReference type="GeneID" id="14657450"/>
<dbReference type="GO" id="GO:0009535">
    <property type="term" value="C:chloroplast thylakoid membrane"/>
    <property type="evidence" value="ECO:0007669"/>
    <property type="project" value="UniProtKB-SubCell"/>
</dbReference>
<dbReference type="GO" id="GO:0009539">
    <property type="term" value="C:photosystem II reaction center"/>
    <property type="evidence" value="ECO:0007669"/>
    <property type="project" value="InterPro"/>
</dbReference>
<dbReference type="GO" id="GO:0015979">
    <property type="term" value="P:photosynthesis"/>
    <property type="evidence" value="ECO:0007669"/>
    <property type="project" value="UniProtKB-UniRule"/>
</dbReference>
<dbReference type="HAMAP" id="MF_00808">
    <property type="entry name" value="PSII_PsbT"/>
    <property type="match status" value="1"/>
</dbReference>
<dbReference type="InterPro" id="IPR001743">
    <property type="entry name" value="PSII_PsbT"/>
</dbReference>
<dbReference type="InterPro" id="IPR037268">
    <property type="entry name" value="PSII_PsbT_sf"/>
</dbReference>
<dbReference type="PANTHER" id="PTHR36411">
    <property type="match status" value="1"/>
</dbReference>
<dbReference type="PANTHER" id="PTHR36411:SF2">
    <property type="entry name" value="PHOTOSYSTEM II REACTION CENTER PROTEIN T"/>
    <property type="match status" value="1"/>
</dbReference>
<dbReference type="Pfam" id="PF01405">
    <property type="entry name" value="PsbT"/>
    <property type="match status" value="1"/>
</dbReference>
<dbReference type="SUPFAM" id="SSF161029">
    <property type="entry name" value="Photosystem II reaction center protein T, PsbT"/>
    <property type="match status" value="1"/>
</dbReference>
<geneLocation type="chloroplast"/>
<feature type="chain" id="PRO_0000217926" description="Photosystem II reaction center protein T">
    <location>
        <begin position="1"/>
        <end position="35"/>
    </location>
</feature>
<feature type="transmembrane region" description="Helical" evidence="1">
    <location>
        <begin position="3"/>
        <end position="23"/>
    </location>
</feature>
<sequence>MEALVYTFLLVSTLGIIFFAIFFREPPKVPDKGSK</sequence>
<name>PSBT_CYCRE</name>
<evidence type="ECO:0000255" key="1">
    <source>
        <dbReference type="HAMAP-Rule" id="MF_00808"/>
    </source>
</evidence>
<proteinExistence type="inferred from homology"/>
<comment type="function">
    <text evidence="1">Found at the monomer-monomer interface of the photosystem II (PS II) dimer, plays a role in assembly and dimerization of PSII. PSII is a light-driven water plastoquinone oxidoreductase, using light energy to abstract electrons from H(2)O, generating a proton gradient subsequently used for ATP formation.</text>
</comment>
<comment type="subunit">
    <text evidence="1">PSII is composed of 1 copy each of membrane proteins PsbA, PsbB, PsbC, PsbD, PsbE, PsbF, PsbH, PsbI, PsbJ, PsbK, PsbL, PsbM, PsbT, PsbY, PsbZ, Psb30/Ycf12, at least 3 peripheral proteins of the oxygen-evolving complex and a large number of cofactors. It forms dimeric complexes.</text>
</comment>
<comment type="subcellular location">
    <subcellularLocation>
        <location evidence="1">Plastid</location>
        <location evidence="1">Chloroplast thylakoid membrane</location>
        <topology evidence="1">Single-pass membrane protein</topology>
    </subcellularLocation>
</comment>
<comment type="similarity">
    <text evidence="1">Belongs to the PsbT family.</text>
</comment>
<accession>Q71LA7</accession>
<reference key="1">
    <citation type="journal article" date="2003" name="Mol. Phylogenet. Evol.">
        <title>Inference of higher-order relationships in the cycads from a large chloroplast data set.</title>
        <authorList>
            <person name="Rai H.S."/>
            <person name="O'Brien H.E."/>
            <person name="Reeves P.A."/>
            <person name="Olmstead R.G."/>
            <person name="Graham S.W."/>
        </authorList>
    </citation>
    <scope>NUCLEOTIDE SEQUENCE [GENOMIC DNA]</scope>
</reference>
<gene>
    <name evidence="1" type="primary">psbT</name>
</gene>
<organism>
    <name type="scientific">Cycas revoluta</name>
    <name type="common">Sago palm</name>
    <dbReference type="NCBI Taxonomy" id="3396"/>
    <lineage>
        <taxon>Eukaryota</taxon>
        <taxon>Viridiplantae</taxon>
        <taxon>Streptophyta</taxon>
        <taxon>Embryophyta</taxon>
        <taxon>Tracheophyta</taxon>
        <taxon>Spermatophyta</taxon>
        <taxon>Cycadidae</taxon>
        <taxon>Cycadales</taxon>
        <taxon>Cycadaceae</taxon>
        <taxon>Cycas</taxon>
    </lineage>
</organism>